<reference key="1">
    <citation type="journal article" date="1995" name="Genes Dev.">
        <title>A novel DNA-binding regulatory factor is mutated in primary MHC class II deficiency (bare lymphocyte syndrome).</title>
        <authorList>
            <person name="Steimle V."/>
            <person name="Durand B."/>
            <person name="Barras E."/>
            <person name="Zufferey M."/>
            <person name="Hadam M.R."/>
            <person name="Mach B."/>
            <person name="Reith W."/>
        </authorList>
    </citation>
    <scope>NUCLEOTIDE SEQUENCE [MRNA] (ISOFORM 1)</scope>
    <scope>INVOLVEMENT IN MHC2D3</scope>
</reference>
<reference key="2">
    <citation type="journal article" date="2004" name="Nat. Genet.">
        <title>Complete sequencing and characterization of 21,243 full-length human cDNAs.</title>
        <authorList>
            <person name="Ota T."/>
            <person name="Suzuki Y."/>
            <person name="Nishikawa T."/>
            <person name="Otsuki T."/>
            <person name="Sugiyama T."/>
            <person name="Irie R."/>
            <person name="Wakamatsu A."/>
            <person name="Hayashi K."/>
            <person name="Sato H."/>
            <person name="Nagai K."/>
            <person name="Kimura K."/>
            <person name="Makita H."/>
            <person name="Sekine M."/>
            <person name="Obayashi M."/>
            <person name="Nishi T."/>
            <person name="Shibahara T."/>
            <person name="Tanaka T."/>
            <person name="Ishii S."/>
            <person name="Yamamoto J."/>
            <person name="Saito K."/>
            <person name="Kawai Y."/>
            <person name="Isono Y."/>
            <person name="Nakamura Y."/>
            <person name="Nagahari K."/>
            <person name="Murakami K."/>
            <person name="Yasuda T."/>
            <person name="Iwayanagi T."/>
            <person name="Wagatsuma M."/>
            <person name="Shiratori A."/>
            <person name="Sudo H."/>
            <person name="Hosoiri T."/>
            <person name="Kaku Y."/>
            <person name="Kodaira H."/>
            <person name="Kondo H."/>
            <person name="Sugawara M."/>
            <person name="Takahashi M."/>
            <person name="Kanda K."/>
            <person name="Yokoi T."/>
            <person name="Furuya T."/>
            <person name="Kikkawa E."/>
            <person name="Omura Y."/>
            <person name="Abe K."/>
            <person name="Kamihara K."/>
            <person name="Katsuta N."/>
            <person name="Sato K."/>
            <person name="Tanikawa M."/>
            <person name="Yamazaki M."/>
            <person name="Ninomiya K."/>
            <person name="Ishibashi T."/>
            <person name="Yamashita H."/>
            <person name="Murakawa K."/>
            <person name="Fujimori K."/>
            <person name="Tanai H."/>
            <person name="Kimata M."/>
            <person name="Watanabe M."/>
            <person name="Hiraoka S."/>
            <person name="Chiba Y."/>
            <person name="Ishida S."/>
            <person name="Ono Y."/>
            <person name="Takiguchi S."/>
            <person name="Watanabe S."/>
            <person name="Yosida M."/>
            <person name="Hotuta T."/>
            <person name="Kusano J."/>
            <person name="Kanehori K."/>
            <person name="Takahashi-Fujii A."/>
            <person name="Hara H."/>
            <person name="Tanase T.-O."/>
            <person name="Nomura Y."/>
            <person name="Togiya S."/>
            <person name="Komai F."/>
            <person name="Hara R."/>
            <person name="Takeuchi K."/>
            <person name="Arita M."/>
            <person name="Imose N."/>
            <person name="Musashino K."/>
            <person name="Yuuki H."/>
            <person name="Oshima A."/>
            <person name="Sasaki N."/>
            <person name="Aotsuka S."/>
            <person name="Yoshikawa Y."/>
            <person name="Matsunawa H."/>
            <person name="Ichihara T."/>
            <person name="Shiohata N."/>
            <person name="Sano S."/>
            <person name="Moriya S."/>
            <person name="Momiyama H."/>
            <person name="Satoh N."/>
            <person name="Takami S."/>
            <person name="Terashima Y."/>
            <person name="Suzuki O."/>
            <person name="Nakagawa S."/>
            <person name="Senoh A."/>
            <person name="Mizoguchi H."/>
            <person name="Goto Y."/>
            <person name="Shimizu F."/>
            <person name="Wakebe H."/>
            <person name="Hishigaki H."/>
            <person name="Watanabe T."/>
            <person name="Sugiyama A."/>
            <person name="Takemoto M."/>
            <person name="Kawakami B."/>
            <person name="Yamazaki M."/>
            <person name="Watanabe K."/>
            <person name="Kumagai A."/>
            <person name="Itakura S."/>
            <person name="Fukuzumi Y."/>
            <person name="Fujimori Y."/>
            <person name="Komiyama M."/>
            <person name="Tashiro H."/>
            <person name="Tanigami A."/>
            <person name="Fujiwara T."/>
            <person name="Ono T."/>
            <person name="Yamada K."/>
            <person name="Fujii Y."/>
            <person name="Ozaki K."/>
            <person name="Hirao M."/>
            <person name="Ohmori Y."/>
            <person name="Kawabata A."/>
            <person name="Hikiji T."/>
            <person name="Kobatake N."/>
            <person name="Inagaki H."/>
            <person name="Ikema Y."/>
            <person name="Okamoto S."/>
            <person name="Okitani R."/>
            <person name="Kawakami T."/>
            <person name="Noguchi S."/>
            <person name="Itoh T."/>
            <person name="Shigeta K."/>
            <person name="Senba T."/>
            <person name="Matsumura K."/>
            <person name="Nakajima Y."/>
            <person name="Mizuno T."/>
            <person name="Morinaga M."/>
            <person name="Sasaki M."/>
            <person name="Togashi T."/>
            <person name="Oyama M."/>
            <person name="Hata H."/>
            <person name="Watanabe M."/>
            <person name="Komatsu T."/>
            <person name="Mizushima-Sugano J."/>
            <person name="Satoh T."/>
            <person name="Shirai Y."/>
            <person name="Takahashi Y."/>
            <person name="Nakagawa K."/>
            <person name="Okumura K."/>
            <person name="Nagase T."/>
            <person name="Nomura N."/>
            <person name="Kikuchi H."/>
            <person name="Masuho Y."/>
            <person name="Yamashita R."/>
            <person name="Nakai K."/>
            <person name="Yada T."/>
            <person name="Nakamura Y."/>
            <person name="Ohara O."/>
            <person name="Isogai T."/>
            <person name="Sugano S."/>
        </authorList>
    </citation>
    <scope>NUCLEOTIDE SEQUENCE [LARGE SCALE MRNA] (ISOFORM 2)</scope>
    <source>
        <tissue>Testis</tissue>
    </source>
</reference>
<reference key="3">
    <citation type="journal article" date="2006" name="Nature">
        <title>The DNA sequence and biological annotation of human chromosome 1.</title>
        <authorList>
            <person name="Gregory S.G."/>
            <person name="Barlow K.F."/>
            <person name="McLay K.E."/>
            <person name="Kaul R."/>
            <person name="Swarbreck D."/>
            <person name="Dunham A."/>
            <person name="Scott C.E."/>
            <person name="Howe K.L."/>
            <person name="Woodfine K."/>
            <person name="Spencer C.C.A."/>
            <person name="Jones M.C."/>
            <person name="Gillson C."/>
            <person name="Searle S."/>
            <person name="Zhou Y."/>
            <person name="Kokocinski F."/>
            <person name="McDonald L."/>
            <person name="Evans R."/>
            <person name="Phillips K."/>
            <person name="Atkinson A."/>
            <person name="Cooper R."/>
            <person name="Jones C."/>
            <person name="Hall R.E."/>
            <person name="Andrews T.D."/>
            <person name="Lloyd C."/>
            <person name="Ainscough R."/>
            <person name="Almeida J.P."/>
            <person name="Ambrose K.D."/>
            <person name="Anderson F."/>
            <person name="Andrew R.W."/>
            <person name="Ashwell R.I.S."/>
            <person name="Aubin K."/>
            <person name="Babbage A.K."/>
            <person name="Bagguley C.L."/>
            <person name="Bailey J."/>
            <person name="Beasley H."/>
            <person name="Bethel G."/>
            <person name="Bird C.P."/>
            <person name="Bray-Allen S."/>
            <person name="Brown J.Y."/>
            <person name="Brown A.J."/>
            <person name="Buckley D."/>
            <person name="Burton J."/>
            <person name="Bye J."/>
            <person name="Carder C."/>
            <person name="Chapman J.C."/>
            <person name="Clark S.Y."/>
            <person name="Clarke G."/>
            <person name="Clee C."/>
            <person name="Cobley V."/>
            <person name="Collier R.E."/>
            <person name="Corby N."/>
            <person name="Coville G.J."/>
            <person name="Davies J."/>
            <person name="Deadman R."/>
            <person name="Dunn M."/>
            <person name="Earthrowl M."/>
            <person name="Ellington A.G."/>
            <person name="Errington H."/>
            <person name="Frankish A."/>
            <person name="Frankland J."/>
            <person name="French L."/>
            <person name="Garner P."/>
            <person name="Garnett J."/>
            <person name="Gay L."/>
            <person name="Ghori M.R.J."/>
            <person name="Gibson R."/>
            <person name="Gilby L.M."/>
            <person name="Gillett W."/>
            <person name="Glithero R.J."/>
            <person name="Grafham D.V."/>
            <person name="Griffiths C."/>
            <person name="Griffiths-Jones S."/>
            <person name="Grocock R."/>
            <person name="Hammond S."/>
            <person name="Harrison E.S.I."/>
            <person name="Hart E."/>
            <person name="Haugen E."/>
            <person name="Heath P.D."/>
            <person name="Holmes S."/>
            <person name="Holt K."/>
            <person name="Howden P.J."/>
            <person name="Hunt A.R."/>
            <person name="Hunt S.E."/>
            <person name="Hunter G."/>
            <person name="Isherwood J."/>
            <person name="James R."/>
            <person name="Johnson C."/>
            <person name="Johnson D."/>
            <person name="Joy A."/>
            <person name="Kay M."/>
            <person name="Kershaw J.K."/>
            <person name="Kibukawa M."/>
            <person name="Kimberley A.M."/>
            <person name="King A."/>
            <person name="Knights A.J."/>
            <person name="Lad H."/>
            <person name="Laird G."/>
            <person name="Lawlor S."/>
            <person name="Leongamornlert D.A."/>
            <person name="Lloyd D.M."/>
            <person name="Loveland J."/>
            <person name="Lovell J."/>
            <person name="Lush M.J."/>
            <person name="Lyne R."/>
            <person name="Martin S."/>
            <person name="Mashreghi-Mohammadi M."/>
            <person name="Matthews L."/>
            <person name="Matthews N.S.W."/>
            <person name="McLaren S."/>
            <person name="Milne S."/>
            <person name="Mistry S."/>
            <person name="Moore M.J.F."/>
            <person name="Nickerson T."/>
            <person name="O'Dell C.N."/>
            <person name="Oliver K."/>
            <person name="Palmeiri A."/>
            <person name="Palmer S.A."/>
            <person name="Parker A."/>
            <person name="Patel D."/>
            <person name="Pearce A.V."/>
            <person name="Peck A.I."/>
            <person name="Pelan S."/>
            <person name="Phelps K."/>
            <person name="Phillimore B.J."/>
            <person name="Plumb R."/>
            <person name="Rajan J."/>
            <person name="Raymond C."/>
            <person name="Rouse G."/>
            <person name="Saenphimmachak C."/>
            <person name="Sehra H.K."/>
            <person name="Sheridan E."/>
            <person name="Shownkeen R."/>
            <person name="Sims S."/>
            <person name="Skuce C.D."/>
            <person name="Smith M."/>
            <person name="Steward C."/>
            <person name="Subramanian S."/>
            <person name="Sycamore N."/>
            <person name="Tracey A."/>
            <person name="Tromans A."/>
            <person name="Van Helmond Z."/>
            <person name="Wall M."/>
            <person name="Wallis J.M."/>
            <person name="White S."/>
            <person name="Whitehead S.L."/>
            <person name="Wilkinson J.E."/>
            <person name="Willey D.L."/>
            <person name="Williams H."/>
            <person name="Wilming L."/>
            <person name="Wray P.W."/>
            <person name="Wu Z."/>
            <person name="Coulson A."/>
            <person name="Vaudin M."/>
            <person name="Sulston J.E."/>
            <person name="Durbin R.M."/>
            <person name="Hubbard T."/>
            <person name="Wooster R."/>
            <person name="Dunham I."/>
            <person name="Carter N.P."/>
            <person name="McVean G."/>
            <person name="Ross M.T."/>
            <person name="Harrow J."/>
            <person name="Olson M.V."/>
            <person name="Beck S."/>
            <person name="Rogers J."/>
            <person name="Bentley D.R."/>
        </authorList>
    </citation>
    <scope>NUCLEOTIDE SEQUENCE [LARGE SCALE GENOMIC DNA]</scope>
</reference>
<reference key="4">
    <citation type="submission" date="2005-09" db="EMBL/GenBank/DDBJ databases">
        <authorList>
            <person name="Mural R.J."/>
            <person name="Istrail S."/>
            <person name="Sutton G.G."/>
            <person name="Florea L."/>
            <person name="Halpern A.L."/>
            <person name="Mobarry C.M."/>
            <person name="Lippert R."/>
            <person name="Walenz B."/>
            <person name="Shatkay H."/>
            <person name="Dew I."/>
            <person name="Miller J.R."/>
            <person name="Flanigan M.J."/>
            <person name="Edwards N.J."/>
            <person name="Bolanos R."/>
            <person name="Fasulo D."/>
            <person name="Halldorsson B.V."/>
            <person name="Hannenhalli S."/>
            <person name="Turner R."/>
            <person name="Yooseph S."/>
            <person name="Lu F."/>
            <person name="Nusskern D.R."/>
            <person name="Shue B.C."/>
            <person name="Zheng X.H."/>
            <person name="Zhong F."/>
            <person name="Delcher A.L."/>
            <person name="Huson D.H."/>
            <person name="Kravitz S.A."/>
            <person name="Mouchard L."/>
            <person name="Reinert K."/>
            <person name="Remington K.A."/>
            <person name="Clark A.G."/>
            <person name="Waterman M.S."/>
            <person name="Eichler E.E."/>
            <person name="Adams M.D."/>
            <person name="Hunkapiller M.W."/>
            <person name="Myers E.W."/>
            <person name="Venter J.C."/>
        </authorList>
    </citation>
    <scope>NUCLEOTIDE SEQUENCE [LARGE SCALE GENOMIC DNA]</scope>
</reference>
<reference key="5">
    <citation type="journal article" date="2004" name="Genome Res.">
        <title>The status, quality, and expansion of the NIH full-length cDNA project: the Mammalian Gene Collection (MGC).</title>
        <authorList>
            <consortium name="The MGC Project Team"/>
        </authorList>
    </citation>
    <scope>NUCLEOTIDE SEQUENCE [LARGE SCALE MRNA] (ISOFORM 1)</scope>
    <source>
        <tissue>Uterus</tissue>
    </source>
</reference>
<reference key="6">
    <citation type="journal article" date="1999" name="Immunity">
        <title>RFX-B is the gene responsible for the most common cause of the bare lymphocyte syndrome, an MHC class II immunodeficiency.</title>
        <authorList>
            <person name="Nagarajan U.M."/>
            <person name="Louis-Plence P."/>
            <person name="DeSandro A."/>
            <person name="Nilsen R."/>
            <person name="Bushey A."/>
            <person name="Boss J.M."/>
        </authorList>
    </citation>
    <scope>PARTIAL PROTEIN SEQUENCE</scope>
    <source>
        <tissue>Lymphoblast</tissue>
    </source>
</reference>
<reference key="7">
    <citation type="journal article" date="1999" name="Immunity">
        <authorList>
            <person name="Nagarajan U.M."/>
            <person name="Louis-Plence P."/>
            <person name="DeSandro A."/>
            <person name="Nilsen R."/>
            <person name="Bushey A."/>
            <person name="Boss J.M."/>
        </authorList>
    </citation>
    <scope>ERRATUM OF PUBMED:10072068</scope>
</reference>
<reference key="8">
    <citation type="journal article" date="1997" name="Hum. Mutat.">
        <title>Analysis of mutations and chromosomal localisation of the gene encoding RFX5, a novel transcription factor affected in major histocompatibility complex class II deficiency.</title>
        <authorList>
            <person name="Villard J."/>
            <person name="Reith W."/>
            <person name="Barras E."/>
            <person name="Gos A."/>
            <person name="Morris M.A."/>
            <person name="Antonarakis S.E."/>
            <person name="Van den Elsen P.J."/>
            <person name="Mach B."/>
        </authorList>
    </citation>
    <scope>INVOLVEMENT IN MHC2D3</scope>
</reference>
<reference key="9">
    <citation type="journal article" date="2000" name="Mol. Cell. Biol.">
        <title>A functionally essential domain of RFX5 mediates activation of major histocompatibility complex class II promoters by promoting cooperative binding between RFX and NF-Y.</title>
        <authorList>
            <person name="Villard J."/>
            <person name="Peretti M."/>
            <person name="Masternak K."/>
            <person name="Barras E."/>
            <person name="Caretti G."/>
            <person name="Mantovani R."/>
            <person name="Reith W."/>
        </authorList>
    </citation>
    <scope>CHARACTERIZATION</scope>
</reference>
<reference key="10">
    <citation type="journal article" date="2010" name="Sci. Signal.">
        <title>Quantitative phosphoproteomics reveals widespread full phosphorylation site occupancy during mitosis.</title>
        <authorList>
            <person name="Olsen J.V."/>
            <person name="Vermeulen M."/>
            <person name="Santamaria A."/>
            <person name="Kumar C."/>
            <person name="Miller M.L."/>
            <person name="Jensen L.J."/>
            <person name="Gnad F."/>
            <person name="Cox J."/>
            <person name="Jensen T.S."/>
            <person name="Nigg E.A."/>
            <person name="Brunak S."/>
            <person name="Mann M."/>
        </authorList>
    </citation>
    <scope>PHOSPHORYLATION [LARGE SCALE ANALYSIS] AT SER-185</scope>
    <scope>IDENTIFICATION BY MASS SPECTROMETRY [LARGE SCALE ANALYSIS]</scope>
    <source>
        <tissue>Cervix carcinoma</tissue>
    </source>
</reference>
<reference key="11">
    <citation type="journal article" date="2012" name="Proc. Natl. Acad. Sci. U.S.A.">
        <title>N-terminal acetylome analyses and functional insights of the N-terminal acetyltransferase NatB.</title>
        <authorList>
            <person name="Van Damme P."/>
            <person name="Lasa M."/>
            <person name="Polevoda B."/>
            <person name="Gazquez C."/>
            <person name="Elosegui-Artola A."/>
            <person name="Kim D.S."/>
            <person name="De Juan-Pardo E."/>
            <person name="Demeyer K."/>
            <person name="Hole K."/>
            <person name="Larrea E."/>
            <person name="Timmerman E."/>
            <person name="Prieto J."/>
            <person name="Arnesen T."/>
            <person name="Sherman F."/>
            <person name="Gevaert K."/>
            <person name="Aldabe R."/>
        </authorList>
    </citation>
    <scope>ACETYLATION [LARGE SCALE ANALYSIS] AT ALA-2</scope>
    <scope>CLEAVAGE OF INITIATOR METHIONINE [LARGE SCALE ANALYSIS]</scope>
    <scope>IDENTIFICATION BY MASS SPECTROMETRY [LARGE SCALE ANALYSIS]</scope>
</reference>
<reference key="12">
    <citation type="journal article" date="2013" name="J. Proteome Res.">
        <title>Toward a comprehensive characterization of a human cancer cell phosphoproteome.</title>
        <authorList>
            <person name="Zhou H."/>
            <person name="Di Palma S."/>
            <person name="Preisinger C."/>
            <person name="Peng M."/>
            <person name="Polat A.N."/>
            <person name="Heck A.J."/>
            <person name="Mohammed S."/>
        </authorList>
    </citation>
    <scope>PHOSPHORYLATION [LARGE SCALE ANALYSIS] AT SER-10</scope>
    <scope>IDENTIFICATION BY MASS SPECTROMETRY [LARGE SCALE ANALYSIS]</scope>
    <source>
        <tissue>Cervix carcinoma</tissue>
        <tissue>Erythroleukemia</tissue>
    </source>
</reference>
<reference key="13">
    <citation type="journal article" date="2014" name="Mol. Cell. Proteomics">
        <title>Immunoaffinity enrichment and mass spectrometry analysis of protein methylation.</title>
        <authorList>
            <person name="Guo A."/>
            <person name="Gu H."/>
            <person name="Zhou J."/>
            <person name="Mulhern D."/>
            <person name="Wang Y."/>
            <person name="Lee K.A."/>
            <person name="Yang V."/>
            <person name="Aguiar M."/>
            <person name="Kornhauser J."/>
            <person name="Jia X."/>
            <person name="Ren J."/>
            <person name="Beausoleil S.A."/>
            <person name="Silva J.C."/>
            <person name="Vemulapalli V."/>
            <person name="Bedford M.T."/>
            <person name="Comb M.J."/>
        </authorList>
    </citation>
    <scope>IDENTIFICATION BY MASS SPECTROMETRY [LARGE SCALE ANALYSIS]</scope>
    <source>
        <tissue>Colon carcinoma</tissue>
    </source>
</reference>
<reference key="14">
    <citation type="journal article" date="2010" name="J. Mol. Biol.">
        <title>Solution structure of the heterotrimeric complex between the interaction domains of RFX5 and RFXAP from the RFX gene regulatory complex.</title>
        <authorList>
            <person name="Laird K.M."/>
            <person name="Briggs L.L."/>
            <person name="Boss J.M."/>
            <person name="Summers M.F."/>
            <person name="Garvie C.W."/>
        </authorList>
    </citation>
    <scope>STRUCTURE BY NMR OF 24-90</scope>
    <scope>SUBUNIT</scope>
    <scope>DOMAIN N-TERMINAL</scope>
</reference>
<reference key="15">
    <citation type="journal article" date="2012" name="Sci. Signal.">
        <title>Sequence-specific recognition of a PxLPxI/L motif by an ankyrin repeat tumbler lock.</title>
        <authorList>
            <person name="Xu C."/>
            <person name="Jin J."/>
            <person name="Bian C."/>
            <person name="Lam R."/>
            <person name="Tian R."/>
            <person name="Weist R."/>
            <person name="You L."/>
            <person name="Nie J."/>
            <person name="Bochkarev A."/>
            <person name="Tempel W."/>
            <person name="Tan C.S."/>
            <person name="Wasney G.A."/>
            <person name="Vedadi M."/>
            <person name="Gish G.D."/>
            <person name="Arrowsmith C.H."/>
            <person name="Pawson T."/>
            <person name="Yang X.J."/>
            <person name="Min J."/>
        </authorList>
    </citation>
    <scope>X-RAY CRYSTALLOGRAPHY (1.57 ANGSTROMS) OF 167-183 IN COMPLEX WITH RFXANK</scope>
    <scope>MOTIF</scope>
</reference>
<reference key="16">
    <citation type="journal article" date="2000" name="Mol. Cell. Biol.">
        <title>Mutations in the bare lymphocyte syndrome define critical steps in the assembly of the regulatory factor X complex.</title>
        <authorList>
            <person name="Nekrep N."/>
            <person name="Jabrane-Ferrat N."/>
            <person name="Peterlin B.M."/>
        </authorList>
    </citation>
    <scope>VARIANT MHC2D5 GLN-149</scope>
    <scope>INVOLVEMENT IN MHC2D5</scope>
</reference>
<reference key="17">
    <citation type="journal article" date="2019" name="J. Allergy Clin. Immunol. Pract.">
        <title>MHC-II Deficiency Among Egyptians: Novel Mutations and Unique Phenotypes.</title>
        <authorList>
            <person name="El Hawary R.E."/>
            <person name="Mauracher A.A."/>
            <person name="Meshaal S.S."/>
            <person name="Eldash A."/>
            <person name="Abd Elaziz D.S."/>
            <person name="Alkady R."/>
            <person name="Lotfy S."/>
            <person name="Opitz L."/>
            <person name="Galal N.M."/>
            <person name="Boutros J.A."/>
            <person name="Pachlopnik Schmid J."/>
            <person name="Elmarsafy A.M."/>
        </authorList>
    </citation>
    <scope>VARIANTS MHC2D3 VAL-152 AND 239-ARG--PRO-616 DEL</scope>
    <scope>INVOLVEMENT IN MHC2D3</scope>
</reference>
<reference key="18">
    <citation type="journal article" date="2023" name="J. Clin. Immunol.">
        <title>Clinical, Immunological, and Genetic Findings in Iranian Patients with MHC-II Deficiency: Confirmation of c.162delG RFXANK Founder Mutation in the Iranian Population.</title>
        <authorList>
            <person name="Mousavi Khorshidi M.S."/>
            <person name="Seeleuthner Y."/>
            <person name="Chavoshzadeh Z."/>
            <person name="Behfar M."/>
            <person name="Hamidieh A.A."/>
            <person name="Alimadadi H."/>
            <person name="Sherkat R."/>
            <person name="Momen T."/>
            <person name="Behniafard N."/>
            <person name="Eskandarzadeh S."/>
            <person name="Mansouri M."/>
            <person name="Behnam M."/>
            <person name="Mahdavi M."/>
            <person name="Heydarazad Zadeh M."/>
            <person name="Shokri M."/>
            <person name="Alizadeh F."/>
            <person name="Movahedi M."/>
            <person name="Momenilandi M."/>
            <person name="Keramatipour M."/>
            <person name="Casanova J.L."/>
            <person name="Cobat A."/>
            <person name="Abel L."/>
            <person name="Shahrooei M."/>
            <person name="Parvaneh N."/>
        </authorList>
    </citation>
    <scope>VARIANT MHC2D3 HIS-145</scope>
    <scope>INVOLVEMENT IN MHC2D3</scope>
</reference>
<feature type="initiator methionine" description="Removed" evidence="12">
    <location>
        <position position="1"/>
    </location>
</feature>
<feature type="chain" id="PRO_0000215292" description="DNA-binding protein RFX5">
    <location>
        <begin position="2"/>
        <end position="616"/>
    </location>
</feature>
<feature type="DNA-binding region" description="RFX-type winged-helix" evidence="1">
    <location>
        <begin position="92"/>
        <end position="168"/>
    </location>
</feature>
<feature type="region of interest" description="Disordered" evidence="2">
    <location>
        <begin position="1"/>
        <end position="29"/>
    </location>
</feature>
<feature type="region of interest" description="N-terminal domain">
    <location>
        <begin position="25"/>
        <end position="90"/>
    </location>
</feature>
<feature type="region of interest" description="Leucine-rich region; critical for dimer formation and for interaction with RFXAP">
    <location>
        <begin position="62"/>
        <end position="66"/>
    </location>
</feature>
<feature type="region of interest" description="Disordered" evidence="2">
    <location>
        <begin position="252"/>
        <end position="314"/>
    </location>
</feature>
<feature type="region of interest" description="Disordered" evidence="2">
    <location>
        <begin position="391"/>
        <end position="616"/>
    </location>
</feature>
<feature type="short sequence motif" description="PxLPxI/L motif; mediates interaction with RFXANK" evidence="5">
    <location>
        <begin position="173"/>
        <end position="178"/>
    </location>
</feature>
<feature type="compositionally biased region" description="Low complexity" evidence="2">
    <location>
        <begin position="13"/>
        <end position="29"/>
    </location>
</feature>
<feature type="compositionally biased region" description="Basic and acidic residues" evidence="2">
    <location>
        <begin position="276"/>
        <end position="293"/>
    </location>
</feature>
<feature type="compositionally biased region" description="Pro residues" evidence="2">
    <location>
        <begin position="391"/>
        <end position="401"/>
    </location>
</feature>
<feature type="compositionally biased region" description="Basic and acidic residues" evidence="2">
    <location>
        <begin position="424"/>
        <end position="434"/>
    </location>
</feature>
<feature type="compositionally biased region" description="Basic residues" evidence="2">
    <location>
        <begin position="463"/>
        <end position="473"/>
    </location>
</feature>
<feature type="compositionally biased region" description="Gly residues" evidence="2">
    <location>
        <begin position="534"/>
        <end position="546"/>
    </location>
</feature>
<feature type="compositionally biased region" description="Basic and acidic residues" evidence="2">
    <location>
        <begin position="606"/>
        <end position="616"/>
    </location>
</feature>
<feature type="modified residue" description="N-acetylalanine" evidence="12">
    <location>
        <position position="2"/>
    </location>
</feature>
<feature type="modified residue" description="Phosphoserine" evidence="13">
    <location>
        <position position="10"/>
    </location>
</feature>
<feature type="modified residue" description="Phosphoserine" evidence="11">
    <location>
        <position position="185"/>
    </location>
</feature>
<feature type="splice variant" id="VSP_055864" description="In isoform 2." evidence="10">
    <location>
        <begin position="78"/>
        <end position="117"/>
    </location>
</feature>
<feature type="sequence variant" id="VAR_089572" description="In MHC2D3; uncertain significance." evidence="7">
    <original>D</original>
    <variation>H</variation>
    <location>
        <position position="145"/>
    </location>
</feature>
<feature type="sequence variant" id="VAR_015550" description="In MHC2D5; dbSNP:rs137853099." evidence="3">
    <original>R</original>
    <variation>Q</variation>
    <location>
        <position position="149"/>
    </location>
</feature>
<feature type="sequence variant" id="VAR_089573" description="In MHC2D3; uncertain significance." evidence="6">
    <original>G</original>
    <variation>V</variation>
    <location>
        <position position="152"/>
    </location>
</feature>
<feature type="sequence variant" id="VAR_034448" description="In dbSNP:rs2233851.">
    <original>R</original>
    <variation>Q</variation>
    <location>
        <position position="197"/>
    </location>
</feature>
<feature type="sequence variant" id="VAR_089574" description="In MHC2D3; likely pathogenic." evidence="6">
    <location>
        <begin position="239"/>
        <end position="616"/>
    </location>
</feature>
<feature type="sequence variant" id="VAR_034449" description="In dbSNP:rs2233854.">
    <original>P</original>
    <variation>R</variation>
    <location>
        <position position="409"/>
    </location>
</feature>
<feature type="sequence variant" id="VAR_034450" description="In dbSNP:rs2233855.">
    <original>P</original>
    <variation>S</variation>
    <location>
        <position position="499"/>
    </location>
</feature>
<feature type="helix" evidence="14">
    <location>
        <begin position="30"/>
        <end position="36"/>
    </location>
</feature>
<feature type="helix" evidence="14">
    <location>
        <begin position="40"/>
        <end position="54"/>
    </location>
</feature>
<feature type="helix" evidence="14">
    <location>
        <begin position="58"/>
        <end position="66"/>
    </location>
</feature>
<feature type="helix" evidence="14">
    <location>
        <begin position="74"/>
        <end position="78"/>
    </location>
</feature>
<feature type="strand" evidence="14">
    <location>
        <begin position="82"/>
        <end position="86"/>
    </location>
</feature>
<feature type="strand" evidence="15">
    <location>
        <begin position="178"/>
        <end position="180"/>
    </location>
</feature>
<name>RFX5_HUMAN</name>
<dbReference type="EMBL" id="X85786">
    <property type="protein sequence ID" value="CAA59771.1"/>
    <property type="molecule type" value="mRNA"/>
</dbReference>
<dbReference type="EMBL" id="AK302891">
    <property type="protein sequence ID" value="BAH13834.1"/>
    <property type="molecule type" value="mRNA"/>
</dbReference>
<dbReference type="EMBL" id="AL391069">
    <property type="status" value="NOT_ANNOTATED_CDS"/>
    <property type="molecule type" value="Genomic_DNA"/>
</dbReference>
<dbReference type="EMBL" id="CH471121">
    <property type="protein sequence ID" value="EAW53446.1"/>
    <property type="molecule type" value="Genomic_DNA"/>
</dbReference>
<dbReference type="EMBL" id="CH471121">
    <property type="protein sequence ID" value="EAW53447.1"/>
    <property type="molecule type" value="Genomic_DNA"/>
</dbReference>
<dbReference type="EMBL" id="CH471121">
    <property type="protein sequence ID" value="EAW53448.1"/>
    <property type="molecule type" value="Genomic_DNA"/>
</dbReference>
<dbReference type="EMBL" id="BC017471">
    <property type="protein sequence ID" value="AAH17471.1"/>
    <property type="molecule type" value="mRNA"/>
</dbReference>
<dbReference type="CCDS" id="CCDS994.1">
    <molecule id="P48382-1"/>
</dbReference>
<dbReference type="PIR" id="I38155">
    <property type="entry name" value="I38155"/>
</dbReference>
<dbReference type="RefSeq" id="NP_000440.1">
    <molecule id="P48382-1"/>
    <property type="nucleotide sequence ID" value="NM_000449.4"/>
</dbReference>
<dbReference type="RefSeq" id="NP_001020774.1">
    <molecule id="P48382-1"/>
    <property type="nucleotide sequence ID" value="NM_001025603.2"/>
</dbReference>
<dbReference type="RefSeq" id="NP_001366341.1">
    <molecule id="P48382-1"/>
    <property type="nucleotide sequence ID" value="NM_001379412.1"/>
</dbReference>
<dbReference type="RefSeq" id="NP_001366342.1">
    <molecule id="P48382-1"/>
    <property type="nucleotide sequence ID" value="NM_001379413.1"/>
</dbReference>
<dbReference type="RefSeq" id="NP_001366343.1">
    <molecule id="P48382-1"/>
    <property type="nucleotide sequence ID" value="NM_001379414.1"/>
</dbReference>
<dbReference type="RefSeq" id="NP_001366344.1">
    <molecule id="P48382-1"/>
    <property type="nucleotide sequence ID" value="NM_001379415.1"/>
</dbReference>
<dbReference type="RefSeq" id="NP_001366345.1">
    <molecule id="P48382-1"/>
    <property type="nucleotide sequence ID" value="NM_001379416.1"/>
</dbReference>
<dbReference type="RefSeq" id="NP_001366346.1">
    <molecule id="P48382-1"/>
    <property type="nucleotide sequence ID" value="NM_001379417.1"/>
</dbReference>
<dbReference type="RefSeq" id="NP_001366347.1">
    <molecule id="P48382-1"/>
    <property type="nucleotide sequence ID" value="NM_001379418.1"/>
</dbReference>
<dbReference type="RefSeq" id="NP_001366348.1">
    <molecule id="P48382-2"/>
    <property type="nucleotide sequence ID" value="NM_001379419.1"/>
</dbReference>
<dbReference type="RefSeq" id="NP_001366349.1">
    <molecule id="P48382-2"/>
    <property type="nucleotide sequence ID" value="NM_001379420.1"/>
</dbReference>
<dbReference type="RefSeq" id="XP_005245462.1">
    <property type="nucleotide sequence ID" value="XM_005245405.1"/>
</dbReference>
<dbReference type="RefSeq" id="XP_005245463.1">
    <property type="nucleotide sequence ID" value="XM_005245406.3"/>
</dbReference>
<dbReference type="RefSeq" id="XP_011508149.1">
    <property type="nucleotide sequence ID" value="XM_011509847.1"/>
</dbReference>
<dbReference type="RefSeq" id="XP_011508150.1">
    <property type="nucleotide sequence ID" value="XM_011509848.1"/>
</dbReference>
<dbReference type="RefSeq" id="XP_011508151.1">
    <property type="nucleotide sequence ID" value="XM_011509849.1"/>
</dbReference>
<dbReference type="RefSeq" id="XP_011508152.1">
    <property type="nucleotide sequence ID" value="XM_011509850.1"/>
</dbReference>
<dbReference type="RefSeq" id="XP_047282907.1">
    <molecule id="P48382-1"/>
    <property type="nucleotide sequence ID" value="XM_047426951.1"/>
</dbReference>
<dbReference type="RefSeq" id="XP_054194014.1">
    <molecule id="P48382-1"/>
    <property type="nucleotide sequence ID" value="XM_054338039.1"/>
</dbReference>
<dbReference type="PDB" id="2KW3">
    <property type="method" value="NMR"/>
    <property type="chains" value="A/B=24-90"/>
</dbReference>
<dbReference type="PDB" id="3V30">
    <property type="method" value="X-ray"/>
    <property type="resolution" value="1.57 A"/>
    <property type="chains" value="B=167-183"/>
</dbReference>
<dbReference type="PDBsum" id="2KW3"/>
<dbReference type="PDBsum" id="3V30"/>
<dbReference type="SMR" id="P48382"/>
<dbReference type="BioGRID" id="111925">
    <property type="interactions" value="52"/>
</dbReference>
<dbReference type="ComplexPortal" id="CPX-6461">
    <property type="entry name" value="RFX gene regulatory complex"/>
</dbReference>
<dbReference type="CORUM" id="P48382"/>
<dbReference type="ELM" id="P48382"/>
<dbReference type="FunCoup" id="P48382">
    <property type="interactions" value="3280"/>
</dbReference>
<dbReference type="IntAct" id="P48382">
    <property type="interactions" value="27"/>
</dbReference>
<dbReference type="MINT" id="P48382"/>
<dbReference type="STRING" id="9606.ENSP00000290524"/>
<dbReference type="GlyCosmos" id="P48382">
    <property type="glycosylation" value="2 sites, 1 glycan"/>
</dbReference>
<dbReference type="GlyGen" id="P48382">
    <property type="glycosylation" value="5 sites, 1 O-linked glycan (3 sites)"/>
</dbReference>
<dbReference type="iPTMnet" id="P48382"/>
<dbReference type="MetOSite" id="P48382"/>
<dbReference type="PhosphoSitePlus" id="P48382"/>
<dbReference type="BioMuta" id="RFX5"/>
<dbReference type="DMDM" id="1350587"/>
<dbReference type="jPOST" id="P48382"/>
<dbReference type="MassIVE" id="P48382"/>
<dbReference type="PaxDb" id="9606-ENSP00000290524"/>
<dbReference type="PeptideAtlas" id="P48382"/>
<dbReference type="ProteomicsDB" id="55886">
    <molecule id="P48382-1"/>
</dbReference>
<dbReference type="ProteomicsDB" id="6925"/>
<dbReference type="Pumba" id="P48382"/>
<dbReference type="Antibodypedia" id="683">
    <property type="antibodies" value="297 antibodies from 33 providers"/>
</dbReference>
<dbReference type="DNASU" id="5993"/>
<dbReference type="Ensembl" id="ENST00000290524.8">
    <molecule id="P48382-1"/>
    <property type="protein sequence ID" value="ENSP00000290524.4"/>
    <property type="gene ID" value="ENSG00000143390.18"/>
</dbReference>
<dbReference type="Ensembl" id="ENST00000368870.6">
    <molecule id="P48382-1"/>
    <property type="protein sequence ID" value="ENSP00000357864.2"/>
    <property type="gene ID" value="ENSG00000143390.18"/>
</dbReference>
<dbReference type="Ensembl" id="ENST00000452671.7">
    <molecule id="P48382-1"/>
    <property type="protein sequence ID" value="ENSP00000389130.2"/>
    <property type="gene ID" value="ENSG00000143390.18"/>
</dbReference>
<dbReference type="GeneID" id="5993"/>
<dbReference type="KEGG" id="hsa:5993"/>
<dbReference type="MANE-Select" id="ENST00000452671.7">
    <property type="protein sequence ID" value="ENSP00000389130.2"/>
    <property type="RefSeq nucleotide sequence ID" value="NM_001025603.2"/>
    <property type="RefSeq protein sequence ID" value="NP_001020774.1"/>
</dbReference>
<dbReference type="UCSC" id="uc001exv.2">
    <molecule id="P48382-1"/>
    <property type="organism name" value="human"/>
</dbReference>
<dbReference type="AGR" id="HGNC:9986"/>
<dbReference type="CTD" id="5993"/>
<dbReference type="DisGeNET" id="5993"/>
<dbReference type="GeneCards" id="RFX5"/>
<dbReference type="HGNC" id="HGNC:9986">
    <property type="gene designation" value="RFX5"/>
</dbReference>
<dbReference type="HPA" id="ENSG00000143390">
    <property type="expression patterns" value="Low tissue specificity"/>
</dbReference>
<dbReference type="MalaCards" id="RFX5"/>
<dbReference type="MIM" id="601863">
    <property type="type" value="gene"/>
</dbReference>
<dbReference type="MIM" id="620816">
    <property type="type" value="phenotype"/>
</dbReference>
<dbReference type="MIM" id="620818">
    <property type="type" value="phenotype"/>
</dbReference>
<dbReference type="neXtProt" id="NX_P48382"/>
<dbReference type="OpenTargets" id="ENSG00000143390"/>
<dbReference type="Orphanet" id="572">
    <property type="disease" value="Immunodeficiency by defective expression of MHC class II"/>
</dbReference>
<dbReference type="PharmGKB" id="PA34356"/>
<dbReference type="VEuPathDB" id="HostDB:ENSG00000143390"/>
<dbReference type="eggNOG" id="KOG3712">
    <property type="taxonomic scope" value="Eukaryota"/>
</dbReference>
<dbReference type="GeneTree" id="ENSGT01050000244970"/>
<dbReference type="InParanoid" id="P48382"/>
<dbReference type="OMA" id="QMHACTW"/>
<dbReference type="OrthoDB" id="10069709at2759"/>
<dbReference type="PAN-GO" id="P48382">
    <property type="GO annotations" value="3 GO annotations based on evolutionary models"/>
</dbReference>
<dbReference type="PhylomeDB" id="P48382"/>
<dbReference type="TreeFam" id="TF321340"/>
<dbReference type="PathwayCommons" id="P48382"/>
<dbReference type="SignaLink" id="P48382"/>
<dbReference type="SIGNOR" id="P48382"/>
<dbReference type="BioGRID-ORCS" id="5993">
    <property type="hits" value="39 hits in 1178 CRISPR screens"/>
</dbReference>
<dbReference type="ChiTaRS" id="RFX5">
    <property type="organism name" value="human"/>
</dbReference>
<dbReference type="EvolutionaryTrace" id="P48382"/>
<dbReference type="GeneWiki" id="RFX5"/>
<dbReference type="GenomeRNAi" id="5993"/>
<dbReference type="Pharos" id="P48382">
    <property type="development level" value="Tbio"/>
</dbReference>
<dbReference type="PRO" id="PR:P48382"/>
<dbReference type="Proteomes" id="UP000005640">
    <property type="component" value="Chromosome 1"/>
</dbReference>
<dbReference type="RNAct" id="P48382">
    <property type="molecule type" value="protein"/>
</dbReference>
<dbReference type="Bgee" id="ENSG00000143390">
    <property type="expression patterns" value="Expressed in epithelium of nasopharynx and 202 other cell types or tissues"/>
</dbReference>
<dbReference type="ExpressionAtlas" id="P48382">
    <property type="expression patterns" value="baseline and differential"/>
</dbReference>
<dbReference type="GO" id="GO:0000785">
    <property type="term" value="C:chromatin"/>
    <property type="evidence" value="ECO:0000247"/>
    <property type="project" value="NTNU_SB"/>
</dbReference>
<dbReference type="GO" id="GO:0043231">
    <property type="term" value="C:intracellular membrane-bounded organelle"/>
    <property type="evidence" value="ECO:0000314"/>
    <property type="project" value="HPA"/>
</dbReference>
<dbReference type="GO" id="GO:0005654">
    <property type="term" value="C:nucleoplasm"/>
    <property type="evidence" value="ECO:0000314"/>
    <property type="project" value="HPA"/>
</dbReference>
<dbReference type="GO" id="GO:0005634">
    <property type="term" value="C:nucleus"/>
    <property type="evidence" value="ECO:0000314"/>
    <property type="project" value="ComplexPortal"/>
</dbReference>
<dbReference type="GO" id="GO:0090575">
    <property type="term" value="C:RNA polymerase II transcription regulator complex"/>
    <property type="evidence" value="ECO:0000353"/>
    <property type="project" value="ARUK-UCL"/>
</dbReference>
<dbReference type="GO" id="GO:0001228">
    <property type="term" value="F:DNA-binding transcription activator activity, RNA polymerase II-specific"/>
    <property type="evidence" value="ECO:0000314"/>
    <property type="project" value="NTNU_SB"/>
</dbReference>
<dbReference type="GO" id="GO:0000981">
    <property type="term" value="F:DNA-binding transcription factor activity, RNA polymerase II-specific"/>
    <property type="evidence" value="ECO:0000247"/>
    <property type="project" value="NTNU_SB"/>
</dbReference>
<dbReference type="GO" id="GO:0000978">
    <property type="term" value="F:RNA polymerase II cis-regulatory region sequence-specific DNA binding"/>
    <property type="evidence" value="ECO:0000318"/>
    <property type="project" value="GO_Central"/>
</dbReference>
<dbReference type="GO" id="GO:0000977">
    <property type="term" value="F:RNA polymerase II transcription regulatory region sequence-specific DNA binding"/>
    <property type="evidence" value="ECO:0000314"/>
    <property type="project" value="GO_Central"/>
</dbReference>
<dbReference type="GO" id="GO:0043565">
    <property type="term" value="F:sequence-specific DNA binding"/>
    <property type="evidence" value="ECO:0000314"/>
    <property type="project" value="NTNU_SB"/>
</dbReference>
<dbReference type="GO" id="GO:1990837">
    <property type="term" value="F:sequence-specific double-stranded DNA binding"/>
    <property type="evidence" value="ECO:0000314"/>
    <property type="project" value="ARUK-UCL"/>
</dbReference>
<dbReference type="GO" id="GO:0001221">
    <property type="term" value="F:transcription coregulator binding"/>
    <property type="evidence" value="ECO:0000353"/>
    <property type="project" value="BHF-UCL"/>
</dbReference>
<dbReference type="GO" id="GO:0000122">
    <property type="term" value="P:negative regulation of transcription by RNA polymerase II"/>
    <property type="evidence" value="ECO:0007669"/>
    <property type="project" value="Ensembl"/>
</dbReference>
<dbReference type="GO" id="GO:0045348">
    <property type="term" value="P:positive regulation of MHC class II biosynthetic process"/>
    <property type="evidence" value="ECO:0000314"/>
    <property type="project" value="BHF-UCL"/>
</dbReference>
<dbReference type="GO" id="GO:0045944">
    <property type="term" value="P:positive regulation of transcription by RNA polymerase II"/>
    <property type="evidence" value="ECO:0000314"/>
    <property type="project" value="NTNU_SB"/>
</dbReference>
<dbReference type="GO" id="GO:0006357">
    <property type="term" value="P:regulation of transcription by RNA polymerase II"/>
    <property type="evidence" value="ECO:0000318"/>
    <property type="project" value="GO_Central"/>
</dbReference>
<dbReference type="FunFam" id="1.10.10.10:FF:000128">
    <property type="entry name" value="DNA-binding protein RFX5 isoform X1"/>
    <property type="match status" value="1"/>
</dbReference>
<dbReference type="Gene3D" id="6.10.140.1290">
    <property type="match status" value="1"/>
</dbReference>
<dbReference type="Gene3D" id="1.10.10.10">
    <property type="entry name" value="Winged helix-like DNA-binding domain superfamily/Winged helix DNA-binding domain"/>
    <property type="match status" value="1"/>
</dbReference>
<dbReference type="IDEAL" id="IID00452"/>
<dbReference type="InterPro" id="IPR003150">
    <property type="entry name" value="DNA-bd_RFX"/>
</dbReference>
<dbReference type="InterPro" id="IPR039779">
    <property type="entry name" value="RFX-like"/>
</dbReference>
<dbReference type="InterPro" id="IPR029298">
    <property type="entry name" value="RFX5_C"/>
</dbReference>
<dbReference type="InterPro" id="IPR036388">
    <property type="entry name" value="WH-like_DNA-bd_sf"/>
</dbReference>
<dbReference type="InterPro" id="IPR036390">
    <property type="entry name" value="WH_DNA-bd_sf"/>
</dbReference>
<dbReference type="PANTHER" id="PTHR12619:SF18">
    <property type="entry name" value="DNA-BINDING PROTEIN RFX5"/>
    <property type="match status" value="1"/>
</dbReference>
<dbReference type="PANTHER" id="PTHR12619">
    <property type="entry name" value="RFX TRANSCRIPTION FACTOR FAMILY"/>
    <property type="match status" value="1"/>
</dbReference>
<dbReference type="Pfam" id="PF14621">
    <property type="entry name" value="RFX5_DNA_bdg"/>
    <property type="match status" value="1"/>
</dbReference>
<dbReference type="Pfam" id="PF18326">
    <property type="entry name" value="RFX5_N"/>
    <property type="match status" value="1"/>
</dbReference>
<dbReference type="Pfam" id="PF02257">
    <property type="entry name" value="RFX_DNA_binding"/>
    <property type="match status" value="1"/>
</dbReference>
<dbReference type="SMART" id="SM01306">
    <property type="entry name" value="RFX5_DNA_bdg"/>
    <property type="match status" value="1"/>
</dbReference>
<dbReference type="SUPFAM" id="SSF46785">
    <property type="entry name" value="Winged helix' DNA-binding domain"/>
    <property type="match status" value="1"/>
</dbReference>
<dbReference type="PROSITE" id="PS51526">
    <property type="entry name" value="RFX_DBD"/>
    <property type="match status" value="1"/>
</dbReference>
<protein>
    <recommendedName>
        <fullName>DNA-binding protein RFX5</fullName>
    </recommendedName>
    <alternativeName>
        <fullName>Regulatory factor X 5</fullName>
    </alternativeName>
</protein>
<evidence type="ECO:0000255" key="1">
    <source>
        <dbReference type="PROSITE-ProRule" id="PRU00858"/>
    </source>
</evidence>
<evidence type="ECO:0000256" key="2">
    <source>
        <dbReference type="SAM" id="MobiDB-lite"/>
    </source>
</evidence>
<evidence type="ECO:0000269" key="3">
    <source>
    </source>
</evidence>
<evidence type="ECO:0000269" key="4">
    <source>
    </source>
</evidence>
<evidence type="ECO:0000269" key="5">
    <source>
    </source>
</evidence>
<evidence type="ECO:0000269" key="6">
    <source>
    </source>
</evidence>
<evidence type="ECO:0000269" key="7">
    <source>
    </source>
</evidence>
<evidence type="ECO:0000269" key="8">
    <source>
    </source>
</evidence>
<evidence type="ECO:0000269" key="9">
    <source>
    </source>
</evidence>
<evidence type="ECO:0000303" key="10">
    <source>
    </source>
</evidence>
<evidence type="ECO:0007744" key="11">
    <source>
    </source>
</evidence>
<evidence type="ECO:0007744" key="12">
    <source>
    </source>
</evidence>
<evidence type="ECO:0007744" key="13">
    <source>
    </source>
</evidence>
<evidence type="ECO:0007829" key="14">
    <source>
        <dbReference type="PDB" id="2KW3"/>
    </source>
</evidence>
<evidence type="ECO:0007829" key="15">
    <source>
        <dbReference type="PDB" id="3V30"/>
    </source>
</evidence>
<organism>
    <name type="scientific">Homo sapiens</name>
    <name type="common">Human</name>
    <dbReference type="NCBI Taxonomy" id="9606"/>
    <lineage>
        <taxon>Eukaryota</taxon>
        <taxon>Metazoa</taxon>
        <taxon>Chordata</taxon>
        <taxon>Craniata</taxon>
        <taxon>Vertebrata</taxon>
        <taxon>Euteleostomi</taxon>
        <taxon>Mammalia</taxon>
        <taxon>Eutheria</taxon>
        <taxon>Euarchontoglires</taxon>
        <taxon>Primates</taxon>
        <taxon>Haplorrhini</taxon>
        <taxon>Catarrhini</taxon>
        <taxon>Hominidae</taxon>
        <taxon>Homo</taxon>
    </lineage>
</organism>
<gene>
    <name type="primary">RFX5</name>
</gene>
<comment type="function">
    <text>Activates transcription from class II MHC promoters. Recognizes X-boxes. Mediates cooperative binding between RFX and NF-Y. RFX binds the X1 box of MHC-II promoters.</text>
</comment>
<comment type="subunit">
    <text evidence="4 5">Homodimer. The RFX heterotetrameric complex consists of 2 molecules of RFX5 and one each of RFXAP and RFX-B/RFXANK; with each subunit representing a separate complementation group. Interacts (via PxLPxI/L motif) with RFXANK (via ankyrin repeats); the interaction is direct. RFX forms cooperative DNA binding complexes with X2BP and CBF/NF-Y. RFX associates with CIITA to form an active transcriptional complex.</text>
</comment>
<comment type="interaction">
    <interactant intactId="EBI-923266">
        <id>P48382</id>
    </interactant>
    <interactant intactId="EBI-1538819">
        <id>P33076</id>
        <label>CIITA</label>
    </interactant>
    <organismsDiffer>false</organismsDiffer>
    <experiments>2</experiments>
</comment>
<comment type="interaction">
    <interactant intactId="EBI-923266">
        <id>P48382</id>
    </interactant>
    <interactant intactId="EBI-301821">
        <id>Q92769</id>
        <label>HDAC2</label>
    </interactant>
    <organismsDiffer>false</organismsDiffer>
    <experiments>4</experiments>
</comment>
<comment type="interaction">
    <interactant intactId="EBI-923266">
        <id>P48382</id>
    </interactant>
    <interactant intactId="EBI-1057665">
        <id>O14593</id>
        <label>RFXANK</label>
    </interactant>
    <organismsDiffer>false</organismsDiffer>
    <experiments>11</experiments>
</comment>
<comment type="interaction">
    <interactant intactId="EBI-923266">
        <id>P48382</id>
    </interactant>
    <interactant intactId="EBI-3929296">
        <id>O00287</id>
        <label>RFXAP</label>
    </interactant>
    <organismsDiffer>false</organismsDiffer>
    <experiments>13</experiments>
</comment>
<comment type="subcellular location">
    <subcellularLocation>
        <location>Nucleus</location>
    </subcellularLocation>
</comment>
<comment type="alternative products">
    <event type="alternative splicing"/>
    <isoform>
        <id>P48382-1</id>
        <name>1</name>
        <sequence type="displayed"/>
    </isoform>
    <isoform>
        <id>P48382-2</id>
        <name>2</name>
        <sequence type="described" ref="VSP_055864"/>
    </isoform>
</comment>
<comment type="tissue specificity">
    <text>Ubiquitous.</text>
</comment>
<comment type="domain">
    <text evidence="4">The N-terminus is required for dimer formation, association with RFXANK and RFXAP, assembly of the RFX complex, and for binding of this complex to its X box target site in the MHC-II promoter. The C-terminus mediates cooperative binding between the RFX complex and NF-Y.</text>
</comment>
<comment type="domain">
    <text evidence="5">The PxLPxI/L motif mediates interaction with ankyrin repeats of RFXANK.</text>
</comment>
<comment type="PTM">
    <text>Phosphorylated.</text>
</comment>
<comment type="disease" evidence="6 7 8 9">
    <disease id="DI-06906">
        <name>MHC class II deficiency 3</name>
        <acronym>MHC2D3</acronym>
        <description>An autosomal recessive disorder characterized by immunodeficiency and recurrent bacterial, viral, fungal and parasitic infections from birth, usually affecting the respiratory and gastrointestinal tract. Most patients die in infancy or early childhood.</description>
        <dbReference type="MIM" id="620816"/>
    </disease>
    <text>The disease is caused by variants affecting the gene represented in this entry.</text>
</comment>
<comment type="disease" evidence="3">
    <disease id="DI-06907">
        <name>MHC class II deficiency 5</name>
        <acronym>MHC2D5</acronym>
        <description>An autosomal recessive disorder characterized by a defect in constitutive and inducible surface expression of MHC class II molecules on B cells, monocytes, and activated T cells. Affected individuals may present in infancy with infections and hypogammaglobulinemia, but the disease course is mostly benign and patients do not develop severe infections. Some individuals may be asymptomatic.</description>
        <dbReference type="MIM" id="620818"/>
    </disease>
    <text>The disease is caused by variants affecting the gene represented in this entry.</text>
</comment>
<comment type="similarity">
    <text evidence="1">Belongs to the RFX family.</text>
</comment>
<comment type="online information" name="RFX5base">
    <link uri="https://databases.lovd.nl/shared/genes/RFX5"/>
    <text>RFX5 mutation db</text>
</comment>
<keyword id="KW-0002">3D-structure</keyword>
<keyword id="KW-0007">Acetylation</keyword>
<keyword id="KW-0010">Activator</keyword>
<keyword id="KW-0025">Alternative splicing</keyword>
<keyword id="KW-0903">Direct protein sequencing</keyword>
<keyword id="KW-0225">Disease variant</keyword>
<keyword id="KW-0238">DNA-binding</keyword>
<keyword id="KW-0539">Nucleus</keyword>
<keyword id="KW-0597">Phosphoprotein</keyword>
<keyword id="KW-1267">Proteomics identification</keyword>
<keyword id="KW-1185">Reference proteome</keyword>
<keyword id="KW-0705">SCID</keyword>
<keyword id="KW-0804">Transcription</keyword>
<keyword id="KW-0805">Transcription regulation</keyword>
<proteinExistence type="evidence at protein level"/>
<accession>P48382</accession>
<accession>B7Z848</accession>
<accession>D3DV19</accession>
<accession>E9PFU4</accession>
<accession>Q5VWC3</accession>
<sequence length="616" mass="65323">MAEDEPDAKSPKTGGRAPPGGAEAGEPTTLLQRLRGTISKAVQNKVEGILQDVQKFSDNDKLYLYLQLPSGPTTGDKSSEPSTLSNEEYMYAYRWIRNHLEEHTDTCLPKQSVYDAYRKYCESLACCRPLSTANFGKIIREIFPDIKARRLGGRGQSKYCYSGIRRKTLVSMPPLPGLDLKGSESPEMGPEVTPAPRDELVEAACALTCDWAERILKRSFSSIVEVARFLLQQHLISARSAHAHVLKAMGLAEEDEHAPRERSSKPKNGLENPEGGAHKKPERLAQPPKDLEARTGAGPLARGERKKSVVESSAPGANNLQVNALVARLPLLLPRAPRSLIPPIPVSPPILAPRLSSGALKVATLPLSSRAGAPPAAVPIINMILPTVPALPGPGPGPGRAPPGGLTQPRGTENREVGIGGDQGPHDKGVKRTAEVPVSEASGQAPPAKAAKQDIEDTASDAKRKRGRPRKKSGGSGERNSTPLKSAAAMESAQSSRLPWETWGSGGEGNSAGGAERPGPMGEAEKGAVLAQGQGDGTVSKGGRGPGSQHTKEAEDKIPLVPSKVSVIKGSRSQKEAFPLAKGEVDTAPQGNKDLKEHVLQSSLSQEHKDPKATPP</sequence>